<keyword id="KW-0687">Ribonucleoprotein</keyword>
<keyword id="KW-0689">Ribosomal protein</keyword>
<proteinExistence type="inferred from homology"/>
<protein>
    <recommendedName>
        <fullName evidence="1">Large ribosomal subunit protein bL34</fullName>
    </recommendedName>
    <alternativeName>
        <fullName evidence="3">50S ribosomal protein L34</fullName>
    </alternativeName>
</protein>
<feature type="chain" id="PRO_1000196092" description="Large ribosomal subunit protein bL34">
    <location>
        <begin position="1"/>
        <end position="44"/>
    </location>
</feature>
<feature type="region of interest" description="Disordered" evidence="2">
    <location>
        <begin position="1"/>
        <end position="44"/>
    </location>
</feature>
<feature type="compositionally biased region" description="Basic residues" evidence="2">
    <location>
        <begin position="10"/>
        <end position="19"/>
    </location>
</feature>
<feature type="compositionally biased region" description="Basic residues" evidence="2">
    <location>
        <begin position="26"/>
        <end position="44"/>
    </location>
</feature>
<comment type="similarity">
    <text evidence="1">Belongs to the bacterial ribosomal protein bL34 family.</text>
</comment>
<dbReference type="EMBL" id="CP001074">
    <property type="protein sequence ID" value="ACE89474.1"/>
    <property type="molecule type" value="Genomic_DNA"/>
</dbReference>
<dbReference type="SMR" id="B3Q042"/>
<dbReference type="KEGG" id="rec:RHECIAT_CH0000480"/>
<dbReference type="eggNOG" id="COG0230">
    <property type="taxonomic scope" value="Bacteria"/>
</dbReference>
<dbReference type="HOGENOM" id="CLU_129938_2_0_5"/>
<dbReference type="Proteomes" id="UP000008817">
    <property type="component" value="Chromosome"/>
</dbReference>
<dbReference type="GO" id="GO:1990904">
    <property type="term" value="C:ribonucleoprotein complex"/>
    <property type="evidence" value="ECO:0007669"/>
    <property type="project" value="UniProtKB-KW"/>
</dbReference>
<dbReference type="GO" id="GO:0005840">
    <property type="term" value="C:ribosome"/>
    <property type="evidence" value="ECO:0007669"/>
    <property type="project" value="UniProtKB-KW"/>
</dbReference>
<dbReference type="GO" id="GO:0003735">
    <property type="term" value="F:structural constituent of ribosome"/>
    <property type="evidence" value="ECO:0007669"/>
    <property type="project" value="InterPro"/>
</dbReference>
<dbReference type="GO" id="GO:0006412">
    <property type="term" value="P:translation"/>
    <property type="evidence" value="ECO:0007669"/>
    <property type="project" value="UniProtKB-UniRule"/>
</dbReference>
<dbReference type="FunFam" id="1.10.287.3980:FF:000001">
    <property type="entry name" value="Mitochondrial ribosomal protein L34"/>
    <property type="match status" value="1"/>
</dbReference>
<dbReference type="Gene3D" id="1.10.287.3980">
    <property type="match status" value="1"/>
</dbReference>
<dbReference type="HAMAP" id="MF_00391">
    <property type="entry name" value="Ribosomal_bL34"/>
    <property type="match status" value="1"/>
</dbReference>
<dbReference type="InterPro" id="IPR000271">
    <property type="entry name" value="Ribosomal_bL34"/>
</dbReference>
<dbReference type="InterPro" id="IPR020939">
    <property type="entry name" value="Ribosomal_bL34_CS"/>
</dbReference>
<dbReference type="NCBIfam" id="TIGR01030">
    <property type="entry name" value="rpmH_bact"/>
    <property type="match status" value="1"/>
</dbReference>
<dbReference type="PANTHER" id="PTHR14503:SF4">
    <property type="entry name" value="LARGE RIBOSOMAL SUBUNIT PROTEIN BL34M"/>
    <property type="match status" value="1"/>
</dbReference>
<dbReference type="PANTHER" id="PTHR14503">
    <property type="entry name" value="MITOCHONDRIAL RIBOSOMAL PROTEIN 34 FAMILY MEMBER"/>
    <property type="match status" value="1"/>
</dbReference>
<dbReference type="Pfam" id="PF00468">
    <property type="entry name" value="Ribosomal_L34"/>
    <property type="match status" value="1"/>
</dbReference>
<dbReference type="PROSITE" id="PS00784">
    <property type="entry name" value="RIBOSOMAL_L34"/>
    <property type="match status" value="1"/>
</dbReference>
<reference key="1">
    <citation type="journal article" date="2010" name="Appl. Environ. Microbiol.">
        <title>Conserved symbiotic plasmid DNA sequences in the multireplicon pangenomic structure of Rhizobium etli.</title>
        <authorList>
            <person name="Gonzalez V."/>
            <person name="Acosta J.L."/>
            <person name="Santamaria R.I."/>
            <person name="Bustos P."/>
            <person name="Fernandez J.L."/>
            <person name="Hernandez Gonzalez I.L."/>
            <person name="Diaz R."/>
            <person name="Flores M."/>
            <person name="Palacios R."/>
            <person name="Mora J."/>
            <person name="Davila G."/>
        </authorList>
    </citation>
    <scope>NUCLEOTIDE SEQUENCE [LARGE SCALE GENOMIC DNA]</scope>
    <source>
        <strain>CIAT 652</strain>
    </source>
</reference>
<name>RL34_RHIE6</name>
<organism>
    <name type="scientific">Rhizobium etli (strain CIAT 652)</name>
    <dbReference type="NCBI Taxonomy" id="491916"/>
    <lineage>
        <taxon>Bacteria</taxon>
        <taxon>Pseudomonadati</taxon>
        <taxon>Pseudomonadota</taxon>
        <taxon>Alphaproteobacteria</taxon>
        <taxon>Hyphomicrobiales</taxon>
        <taxon>Rhizobiaceae</taxon>
        <taxon>Rhizobium/Agrobacterium group</taxon>
        <taxon>Rhizobium</taxon>
    </lineage>
</organism>
<accession>B3Q042</accession>
<sequence>MKRTYQPSKLVRKRRHGFRARMSTKGGRKVIAARRAQGRKRLSA</sequence>
<gene>
    <name evidence="1" type="primary">rpmH</name>
    <name type="ordered locus">RHECIAT_CH0000480</name>
</gene>
<evidence type="ECO:0000255" key="1">
    <source>
        <dbReference type="HAMAP-Rule" id="MF_00391"/>
    </source>
</evidence>
<evidence type="ECO:0000256" key="2">
    <source>
        <dbReference type="SAM" id="MobiDB-lite"/>
    </source>
</evidence>
<evidence type="ECO:0000305" key="3"/>